<accession>B5R3F1</accession>
<sequence>MLFSPPLQRATLIQRYKRFLADVITPDGTTLTLHCPNTGAMTGCATPGDTVWYSTSENTKRKYPHTWELTETQSGAFICVNTLRANQLTKEAIQENRLPALAGYNILKSEVKYGAERSRIDFMLQADFRPDCYIEVKSVTLAEKENGYFPDAITERGQKHLRELMGVAAAGHRAVVVFAVLHSAITRFSPARHIDIKYAQLLSEAQNKGVEVLAYKAELSAQKMELNEPVPITL</sequence>
<proteinExistence type="inferred from homology"/>
<feature type="chain" id="PRO_1000093587" description="Sugar fermentation stimulation protein A">
    <location>
        <begin position="1"/>
        <end position="234"/>
    </location>
</feature>
<feature type="DNA-binding region" description="H-T-H motif" evidence="1">
    <location>
        <begin position="201"/>
        <end position="220"/>
    </location>
</feature>
<gene>
    <name evidence="1" type="primary">sfsA</name>
    <name type="ordered locus">SEN0192</name>
</gene>
<protein>
    <recommendedName>
        <fullName evidence="1">Sugar fermentation stimulation protein A</fullName>
    </recommendedName>
</protein>
<evidence type="ECO:0000255" key="1">
    <source>
        <dbReference type="HAMAP-Rule" id="MF_00095"/>
    </source>
</evidence>
<reference key="1">
    <citation type="journal article" date="2008" name="Genome Res.">
        <title>Comparative genome analysis of Salmonella enteritidis PT4 and Salmonella gallinarum 287/91 provides insights into evolutionary and host adaptation pathways.</title>
        <authorList>
            <person name="Thomson N.R."/>
            <person name="Clayton D.J."/>
            <person name="Windhorst D."/>
            <person name="Vernikos G."/>
            <person name="Davidson S."/>
            <person name="Churcher C."/>
            <person name="Quail M.A."/>
            <person name="Stevens M."/>
            <person name="Jones M.A."/>
            <person name="Watson M."/>
            <person name="Barron A."/>
            <person name="Layton A."/>
            <person name="Pickard D."/>
            <person name="Kingsley R.A."/>
            <person name="Bignell A."/>
            <person name="Clark L."/>
            <person name="Harris B."/>
            <person name="Ormond D."/>
            <person name="Abdellah Z."/>
            <person name="Brooks K."/>
            <person name="Cherevach I."/>
            <person name="Chillingworth T."/>
            <person name="Woodward J."/>
            <person name="Norberczak H."/>
            <person name="Lord A."/>
            <person name="Arrowsmith C."/>
            <person name="Jagels K."/>
            <person name="Moule S."/>
            <person name="Mungall K."/>
            <person name="Saunders M."/>
            <person name="Whitehead S."/>
            <person name="Chabalgoity J.A."/>
            <person name="Maskell D."/>
            <person name="Humphreys T."/>
            <person name="Roberts M."/>
            <person name="Barrow P.A."/>
            <person name="Dougan G."/>
            <person name="Parkhill J."/>
        </authorList>
    </citation>
    <scope>NUCLEOTIDE SEQUENCE [LARGE SCALE GENOMIC DNA]</scope>
    <source>
        <strain>P125109</strain>
    </source>
</reference>
<keyword id="KW-0238">DNA-binding</keyword>
<organism>
    <name type="scientific">Salmonella enteritidis PT4 (strain P125109)</name>
    <dbReference type="NCBI Taxonomy" id="550537"/>
    <lineage>
        <taxon>Bacteria</taxon>
        <taxon>Pseudomonadati</taxon>
        <taxon>Pseudomonadota</taxon>
        <taxon>Gammaproteobacteria</taxon>
        <taxon>Enterobacterales</taxon>
        <taxon>Enterobacteriaceae</taxon>
        <taxon>Salmonella</taxon>
    </lineage>
</organism>
<name>SFSA_SALEP</name>
<comment type="function">
    <text evidence="1">Binds to DNA non-specifically. Could be a regulatory factor involved in maltose metabolism.</text>
</comment>
<comment type="similarity">
    <text evidence="1">Belongs to the SfsA family.</text>
</comment>
<dbReference type="EMBL" id="AM933172">
    <property type="protein sequence ID" value="CAR31780.1"/>
    <property type="molecule type" value="Genomic_DNA"/>
</dbReference>
<dbReference type="RefSeq" id="WP_000899412.1">
    <property type="nucleotide sequence ID" value="NC_011294.1"/>
</dbReference>
<dbReference type="SMR" id="B5R3F1"/>
<dbReference type="KEGG" id="set:SEN0192"/>
<dbReference type="HOGENOM" id="CLU_052299_2_0_6"/>
<dbReference type="Proteomes" id="UP000000613">
    <property type="component" value="Chromosome"/>
</dbReference>
<dbReference type="GO" id="GO:0003677">
    <property type="term" value="F:DNA binding"/>
    <property type="evidence" value="ECO:0007669"/>
    <property type="project" value="UniProtKB-KW"/>
</dbReference>
<dbReference type="CDD" id="cd22359">
    <property type="entry name" value="SfsA-like_bacterial"/>
    <property type="match status" value="1"/>
</dbReference>
<dbReference type="FunFam" id="2.40.50.580:FF:000001">
    <property type="entry name" value="Sugar fermentation stimulation protein A"/>
    <property type="match status" value="1"/>
</dbReference>
<dbReference type="FunFam" id="3.40.1350.60:FF:000001">
    <property type="entry name" value="Sugar fermentation stimulation protein A"/>
    <property type="match status" value="1"/>
</dbReference>
<dbReference type="Gene3D" id="2.40.50.580">
    <property type="match status" value="1"/>
</dbReference>
<dbReference type="Gene3D" id="3.40.1350.60">
    <property type="match status" value="1"/>
</dbReference>
<dbReference type="HAMAP" id="MF_00095">
    <property type="entry name" value="SfsA"/>
    <property type="match status" value="1"/>
</dbReference>
<dbReference type="InterPro" id="IPR005224">
    <property type="entry name" value="SfsA"/>
</dbReference>
<dbReference type="InterPro" id="IPR040452">
    <property type="entry name" value="SfsA_C"/>
</dbReference>
<dbReference type="InterPro" id="IPR041465">
    <property type="entry name" value="SfsA_N"/>
</dbReference>
<dbReference type="NCBIfam" id="TIGR00230">
    <property type="entry name" value="sfsA"/>
    <property type="match status" value="1"/>
</dbReference>
<dbReference type="PANTHER" id="PTHR30545">
    <property type="entry name" value="SUGAR FERMENTATION STIMULATION PROTEIN A"/>
    <property type="match status" value="1"/>
</dbReference>
<dbReference type="PANTHER" id="PTHR30545:SF2">
    <property type="entry name" value="SUGAR FERMENTATION STIMULATION PROTEIN A"/>
    <property type="match status" value="1"/>
</dbReference>
<dbReference type="Pfam" id="PF03749">
    <property type="entry name" value="SfsA"/>
    <property type="match status" value="1"/>
</dbReference>
<dbReference type="Pfam" id="PF17746">
    <property type="entry name" value="SfsA_N"/>
    <property type="match status" value="1"/>
</dbReference>